<accession>Q5YPB8</accession>
<protein>
    <recommendedName>
        <fullName evidence="1">Protease HtpX homolog</fullName>
        <ecNumber evidence="1">3.4.24.-</ecNumber>
    </recommendedName>
</protein>
<proteinExistence type="inferred from homology"/>
<reference key="1">
    <citation type="journal article" date="2004" name="Proc. Natl. Acad. Sci. U.S.A.">
        <title>The complete genomic sequence of Nocardia farcinica IFM 10152.</title>
        <authorList>
            <person name="Ishikawa J."/>
            <person name="Yamashita A."/>
            <person name="Mikami Y."/>
            <person name="Hoshino Y."/>
            <person name="Kurita H."/>
            <person name="Hotta K."/>
            <person name="Shiba T."/>
            <person name="Hattori M."/>
        </authorList>
    </citation>
    <scope>NUCLEOTIDE SEQUENCE [LARGE SCALE GENOMIC DNA]</scope>
    <source>
        <strain>IFM 10152</strain>
    </source>
</reference>
<name>HTPX_NOCFA</name>
<organism>
    <name type="scientific">Nocardia farcinica (strain IFM 10152)</name>
    <dbReference type="NCBI Taxonomy" id="247156"/>
    <lineage>
        <taxon>Bacteria</taxon>
        <taxon>Bacillati</taxon>
        <taxon>Actinomycetota</taxon>
        <taxon>Actinomycetes</taxon>
        <taxon>Mycobacteriales</taxon>
        <taxon>Nocardiaceae</taxon>
        <taxon>Nocardia</taxon>
    </lineage>
</organism>
<comment type="cofactor">
    <cofactor evidence="1">
        <name>Zn(2+)</name>
        <dbReference type="ChEBI" id="CHEBI:29105"/>
    </cofactor>
    <text evidence="1">Binds 1 zinc ion per subunit.</text>
</comment>
<comment type="subcellular location">
    <subcellularLocation>
        <location evidence="1">Cell membrane</location>
        <topology evidence="1">Multi-pass membrane protein</topology>
    </subcellularLocation>
</comment>
<comment type="similarity">
    <text evidence="1">Belongs to the peptidase M48B family.</text>
</comment>
<gene>
    <name evidence="1" type="primary">htpX</name>
    <name type="ordered locus">NFA_51210</name>
</gene>
<feature type="chain" id="PRO_1000020903" description="Protease HtpX homolog">
    <location>
        <begin position="1"/>
        <end position="295"/>
    </location>
</feature>
<feature type="transmembrane region" description="Helical" evidence="1">
    <location>
        <begin position="10"/>
        <end position="30"/>
    </location>
</feature>
<feature type="transmembrane region" description="Helical" evidence="1">
    <location>
        <begin position="32"/>
        <end position="52"/>
    </location>
</feature>
<feature type="transmembrane region" description="Helical" evidence="1">
    <location>
        <begin position="151"/>
        <end position="171"/>
    </location>
</feature>
<feature type="transmembrane region" description="Helical" evidence="1">
    <location>
        <begin position="184"/>
        <end position="204"/>
    </location>
</feature>
<feature type="active site" evidence="1">
    <location>
        <position position="137"/>
    </location>
</feature>
<feature type="binding site" evidence="1">
    <location>
        <position position="136"/>
    </location>
    <ligand>
        <name>Zn(2+)</name>
        <dbReference type="ChEBI" id="CHEBI:29105"/>
        <note>catalytic</note>
    </ligand>
</feature>
<feature type="binding site" evidence="1">
    <location>
        <position position="140"/>
    </location>
    <ligand>
        <name>Zn(2+)</name>
        <dbReference type="ChEBI" id="CHEBI:29105"/>
        <note>catalytic</note>
    </ligand>
</feature>
<feature type="binding site" evidence="1">
    <location>
        <position position="209"/>
    </location>
    <ligand>
        <name>Zn(2+)</name>
        <dbReference type="ChEBI" id="CHEBI:29105"/>
        <note>catalytic</note>
    </ligand>
</feature>
<keyword id="KW-1003">Cell membrane</keyword>
<keyword id="KW-0378">Hydrolase</keyword>
<keyword id="KW-0472">Membrane</keyword>
<keyword id="KW-0479">Metal-binding</keyword>
<keyword id="KW-0482">Metalloprotease</keyword>
<keyword id="KW-0645">Protease</keyword>
<keyword id="KW-1185">Reference proteome</keyword>
<keyword id="KW-0812">Transmembrane</keyword>
<keyword id="KW-1133">Transmembrane helix</keyword>
<keyword id="KW-0862">Zinc</keyword>
<evidence type="ECO:0000255" key="1">
    <source>
        <dbReference type="HAMAP-Rule" id="MF_00188"/>
    </source>
</evidence>
<sequence length="295" mass="31349">MHGRGYANGLKTFGLMVGLSALIVFAGAMFRNTTILVVAILLAVGMNAWAYFNSDRIALRAMHALPVSELEAPVMYRIVRELATAARQPMPRLYISPTNAPNAFATGRNPRHAAVCCTSGILQILDERELRAVLGHELSHVYNRDILISSIAGALAAVVSGLANLAFFAGAFGGRGNGEGPSMLGVLLVSLLGPIAATLVKLAVSRSREYEADRSGAELTGDPLALASALRKLERGTQAAPLPPEPQLTAQSHLMIANPFRAGERAARLFSTHPPMAERIARLEEMAGGRSGGYR</sequence>
<dbReference type="EC" id="3.4.24.-" evidence="1"/>
<dbReference type="EMBL" id="AP006618">
    <property type="protein sequence ID" value="BAD59973.1"/>
    <property type="molecule type" value="Genomic_DNA"/>
</dbReference>
<dbReference type="RefSeq" id="WP_011211655.1">
    <property type="nucleotide sequence ID" value="NC_006361.1"/>
</dbReference>
<dbReference type="STRING" id="247156.NFA_51210"/>
<dbReference type="GeneID" id="61135699"/>
<dbReference type="KEGG" id="nfa:NFA_51210"/>
<dbReference type="eggNOG" id="COG0501">
    <property type="taxonomic scope" value="Bacteria"/>
</dbReference>
<dbReference type="HOGENOM" id="CLU_042266_3_1_11"/>
<dbReference type="OrthoDB" id="15218at2"/>
<dbReference type="Proteomes" id="UP000006820">
    <property type="component" value="Chromosome"/>
</dbReference>
<dbReference type="GO" id="GO:0005886">
    <property type="term" value="C:plasma membrane"/>
    <property type="evidence" value="ECO:0007669"/>
    <property type="project" value="UniProtKB-SubCell"/>
</dbReference>
<dbReference type="GO" id="GO:0004222">
    <property type="term" value="F:metalloendopeptidase activity"/>
    <property type="evidence" value="ECO:0007669"/>
    <property type="project" value="UniProtKB-UniRule"/>
</dbReference>
<dbReference type="GO" id="GO:0008270">
    <property type="term" value="F:zinc ion binding"/>
    <property type="evidence" value="ECO:0007669"/>
    <property type="project" value="UniProtKB-UniRule"/>
</dbReference>
<dbReference type="GO" id="GO:0006508">
    <property type="term" value="P:proteolysis"/>
    <property type="evidence" value="ECO:0007669"/>
    <property type="project" value="UniProtKB-KW"/>
</dbReference>
<dbReference type="CDD" id="cd07336">
    <property type="entry name" value="M48B_HtpX_like"/>
    <property type="match status" value="1"/>
</dbReference>
<dbReference type="Gene3D" id="3.30.2010.10">
    <property type="entry name" value="Metalloproteases ('zincins'), catalytic domain"/>
    <property type="match status" value="1"/>
</dbReference>
<dbReference type="HAMAP" id="MF_00188">
    <property type="entry name" value="Pept_M48_protease_HtpX"/>
    <property type="match status" value="1"/>
</dbReference>
<dbReference type="InterPro" id="IPR050083">
    <property type="entry name" value="HtpX_protease"/>
</dbReference>
<dbReference type="InterPro" id="IPR022919">
    <property type="entry name" value="Pept_M48_protease_HtpX"/>
</dbReference>
<dbReference type="InterPro" id="IPR001915">
    <property type="entry name" value="Peptidase_M48"/>
</dbReference>
<dbReference type="NCBIfam" id="NF002839">
    <property type="entry name" value="PRK03072.1"/>
    <property type="match status" value="1"/>
</dbReference>
<dbReference type="PANTHER" id="PTHR43221">
    <property type="entry name" value="PROTEASE HTPX"/>
    <property type="match status" value="1"/>
</dbReference>
<dbReference type="PANTHER" id="PTHR43221:SF1">
    <property type="entry name" value="PROTEASE HTPX"/>
    <property type="match status" value="1"/>
</dbReference>
<dbReference type="Pfam" id="PF01435">
    <property type="entry name" value="Peptidase_M48"/>
    <property type="match status" value="1"/>
</dbReference>
<dbReference type="PROSITE" id="PS00142">
    <property type="entry name" value="ZINC_PROTEASE"/>
    <property type="match status" value="1"/>
</dbReference>